<sequence length="130" mass="14431">MSDPLGDMLTRIRNAQRARHAVCVAPASNLRANVLDVLKREGFIRGFSKEELRPGVAQLRIELKYNDGEPVIKEITRVSRPGRRVYSKIKELPRVYAGLGVSILSTPRGVMSDVEARTANVGGEVLCRVF</sequence>
<name>RS8_ACICJ</name>
<gene>
    <name evidence="1" type="primary">rpsH</name>
    <name type="ordered locus">Acry_1932</name>
</gene>
<comment type="function">
    <text evidence="1">One of the primary rRNA binding proteins, it binds directly to 16S rRNA central domain where it helps coordinate assembly of the platform of the 30S subunit.</text>
</comment>
<comment type="subunit">
    <text evidence="1">Part of the 30S ribosomal subunit. Contacts proteins S5 and S12.</text>
</comment>
<comment type="similarity">
    <text evidence="1">Belongs to the universal ribosomal protein uS8 family.</text>
</comment>
<evidence type="ECO:0000255" key="1">
    <source>
        <dbReference type="HAMAP-Rule" id="MF_01302"/>
    </source>
</evidence>
<evidence type="ECO:0000305" key="2"/>
<accession>A5FZV1</accession>
<proteinExistence type="inferred from homology"/>
<feature type="chain" id="PRO_0000322019" description="Small ribosomal subunit protein uS8">
    <location>
        <begin position="1"/>
        <end position="130"/>
    </location>
</feature>
<keyword id="KW-1185">Reference proteome</keyword>
<keyword id="KW-0687">Ribonucleoprotein</keyword>
<keyword id="KW-0689">Ribosomal protein</keyword>
<keyword id="KW-0694">RNA-binding</keyword>
<keyword id="KW-0699">rRNA-binding</keyword>
<dbReference type="EMBL" id="CP000697">
    <property type="protein sequence ID" value="ABQ31133.1"/>
    <property type="molecule type" value="Genomic_DNA"/>
</dbReference>
<dbReference type="SMR" id="A5FZV1"/>
<dbReference type="STRING" id="349163.Acry_1932"/>
<dbReference type="KEGG" id="acr:Acry_1932"/>
<dbReference type="eggNOG" id="COG0096">
    <property type="taxonomic scope" value="Bacteria"/>
</dbReference>
<dbReference type="HOGENOM" id="CLU_098428_0_0_5"/>
<dbReference type="Proteomes" id="UP000000245">
    <property type="component" value="Chromosome"/>
</dbReference>
<dbReference type="GO" id="GO:1990904">
    <property type="term" value="C:ribonucleoprotein complex"/>
    <property type="evidence" value="ECO:0007669"/>
    <property type="project" value="UniProtKB-KW"/>
</dbReference>
<dbReference type="GO" id="GO:0005840">
    <property type="term" value="C:ribosome"/>
    <property type="evidence" value="ECO:0007669"/>
    <property type="project" value="UniProtKB-KW"/>
</dbReference>
<dbReference type="GO" id="GO:0019843">
    <property type="term" value="F:rRNA binding"/>
    <property type="evidence" value="ECO:0007669"/>
    <property type="project" value="UniProtKB-UniRule"/>
</dbReference>
<dbReference type="GO" id="GO:0003735">
    <property type="term" value="F:structural constituent of ribosome"/>
    <property type="evidence" value="ECO:0007669"/>
    <property type="project" value="InterPro"/>
</dbReference>
<dbReference type="GO" id="GO:0006412">
    <property type="term" value="P:translation"/>
    <property type="evidence" value="ECO:0007669"/>
    <property type="project" value="UniProtKB-UniRule"/>
</dbReference>
<dbReference type="FunFam" id="3.30.1370.30:FF:000002">
    <property type="entry name" value="30S ribosomal protein S8"/>
    <property type="match status" value="1"/>
</dbReference>
<dbReference type="FunFam" id="3.30.1490.10:FF:000001">
    <property type="entry name" value="30S ribosomal protein S8"/>
    <property type="match status" value="1"/>
</dbReference>
<dbReference type="Gene3D" id="3.30.1370.30">
    <property type="match status" value="1"/>
</dbReference>
<dbReference type="Gene3D" id="3.30.1490.10">
    <property type="match status" value="1"/>
</dbReference>
<dbReference type="HAMAP" id="MF_01302_B">
    <property type="entry name" value="Ribosomal_uS8_B"/>
    <property type="match status" value="1"/>
</dbReference>
<dbReference type="InterPro" id="IPR000630">
    <property type="entry name" value="Ribosomal_uS8"/>
</dbReference>
<dbReference type="InterPro" id="IPR047863">
    <property type="entry name" value="Ribosomal_uS8_CS"/>
</dbReference>
<dbReference type="InterPro" id="IPR035987">
    <property type="entry name" value="Ribosomal_uS8_sf"/>
</dbReference>
<dbReference type="NCBIfam" id="NF001109">
    <property type="entry name" value="PRK00136.1"/>
    <property type="match status" value="1"/>
</dbReference>
<dbReference type="PANTHER" id="PTHR11758">
    <property type="entry name" value="40S RIBOSOMAL PROTEIN S15A"/>
    <property type="match status" value="1"/>
</dbReference>
<dbReference type="Pfam" id="PF00410">
    <property type="entry name" value="Ribosomal_S8"/>
    <property type="match status" value="1"/>
</dbReference>
<dbReference type="SUPFAM" id="SSF56047">
    <property type="entry name" value="Ribosomal protein S8"/>
    <property type="match status" value="1"/>
</dbReference>
<dbReference type="PROSITE" id="PS00053">
    <property type="entry name" value="RIBOSOMAL_S8"/>
    <property type="match status" value="1"/>
</dbReference>
<organism>
    <name type="scientific">Acidiphilium cryptum (strain JF-5)</name>
    <dbReference type="NCBI Taxonomy" id="349163"/>
    <lineage>
        <taxon>Bacteria</taxon>
        <taxon>Pseudomonadati</taxon>
        <taxon>Pseudomonadota</taxon>
        <taxon>Alphaproteobacteria</taxon>
        <taxon>Acetobacterales</taxon>
        <taxon>Acidocellaceae</taxon>
        <taxon>Acidiphilium</taxon>
    </lineage>
</organism>
<reference key="1">
    <citation type="submission" date="2007-05" db="EMBL/GenBank/DDBJ databases">
        <title>Complete sequence of chromosome of Acidiphilium cryptum JF-5.</title>
        <authorList>
            <consortium name="US DOE Joint Genome Institute"/>
            <person name="Copeland A."/>
            <person name="Lucas S."/>
            <person name="Lapidus A."/>
            <person name="Barry K."/>
            <person name="Detter J.C."/>
            <person name="Glavina del Rio T."/>
            <person name="Hammon N."/>
            <person name="Israni S."/>
            <person name="Dalin E."/>
            <person name="Tice H."/>
            <person name="Pitluck S."/>
            <person name="Sims D."/>
            <person name="Brettin T."/>
            <person name="Bruce D."/>
            <person name="Han C."/>
            <person name="Schmutz J."/>
            <person name="Larimer F."/>
            <person name="Land M."/>
            <person name="Hauser L."/>
            <person name="Kyrpides N."/>
            <person name="Kim E."/>
            <person name="Magnuson T."/>
            <person name="Richardson P."/>
        </authorList>
    </citation>
    <scope>NUCLEOTIDE SEQUENCE [LARGE SCALE GENOMIC DNA]</scope>
    <source>
        <strain>JF-5</strain>
    </source>
</reference>
<protein>
    <recommendedName>
        <fullName evidence="1">Small ribosomal subunit protein uS8</fullName>
    </recommendedName>
    <alternativeName>
        <fullName evidence="2">30S ribosomal protein S8</fullName>
    </alternativeName>
</protein>